<gene>
    <name type="primary">Klf5</name>
    <name type="synonym">Bteb2</name>
    <name type="synonym">Iklf</name>
</gene>
<sequence>MPTRVLTMSARLGPLPQPPAAQDEPVFAQLKPVLGAANPARDAALFSGDDLKHAHHHPPAPPPAAGPRLPSEELVQTRCEMEKYLTPQLPPVPIISEHKKYRRDSASVVDQFFTDTEGIPYSINMNVFLPDITHLRTGLYKSQRPCVTQIKTEPVTIFSHQSESTAPPPPPAPTQALPEFTSIFSSHQTTAPPQEVNNIFIKQELPIPDLHLSVPSQQGHLYQLLNTPDLDMPSSTNQTAVMDTLNVSMAGLNPHPSAVPQTSMKQFQGMPPCTYTMPSQFLPQQATYFPPSPPSSEPGSPDRQAEMLQNLTPPPSYAATIASKLAIHNPNLPATLPVNSPTLPPVRYNRRSNPDLEKRRIHFCDYNGCTKVYTKSSHLKAHLRTHTGEKPYKCTWEGCDWRFARSDELTRHYRKHTGAKPFQCMVCQRSFSRSDHLALHMKRHQN</sequence>
<accession>Q9Z0Z7</accession>
<accession>Q9JMI2</accession>
<organism>
    <name type="scientific">Mus musculus</name>
    <name type="common">Mouse</name>
    <dbReference type="NCBI Taxonomy" id="10090"/>
    <lineage>
        <taxon>Eukaryota</taxon>
        <taxon>Metazoa</taxon>
        <taxon>Chordata</taxon>
        <taxon>Craniata</taxon>
        <taxon>Vertebrata</taxon>
        <taxon>Euteleostomi</taxon>
        <taxon>Mammalia</taxon>
        <taxon>Eutheria</taxon>
        <taxon>Euarchontoglires</taxon>
        <taxon>Glires</taxon>
        <taxon>Rodentia</taxon>
        <taxon>Myomorpha</taxon>
        <taxon>Muroidea</taxon>
        <taxon>Muridae</taxon>
        <taxon>Murinae</taxon>
        <taxon>Mus</taxon>
        <taxon>Mus</taxon>
    </lineage>
</organism>
<keyword id="KW-0010">Activator</keyword>
<keyword id="KW-0238">DNA-binding</keyword>
<keyword id="KW-1017">Isopeptide bond</keyword>
<keyword id="KW-0479">Metal-binding</keyword>
<keyword id="KW-0539">Nucleus</keyword>
<keyword id="KW-1185">Reference proteome</keyword>
<keyword id="KW-0677">Repeat</keyword>
<keyword id="KW-0804">Transcription</keyword>
<keyword id="KW-0805">Transcription regulation</keyword>
<keyword id="KW-0832">Ubl conjugation</keyword>
<keyword id="KW-0862">Zinc</keyword>
<keyword id="KW-0863">Zinc-finger</keyword>
<dbReference type="EMBL" id="AF079852">
    <property type="protein sequence ID" value="AAD17696.1"/>
    <property type="molecule type" value="mRNA"/>
</dbReference>
<dbReference type="EMBL" id="AB025099">
    <property type="protein sequence ID" value="BAA92284.3"/>
    <property type="molecule type" value="mRNA"/>
</dbReference>
<dbReference type="EMBL" id="BC012958">
    <property type="protein sequence ID" value="AAH12958.1"/>
    <property type="molecule type" value="mRNA"/>
</dbReference>
<dbReference type="CCDS" id="CCDS27311.1"/>
<dbReference type="RefSeq" id="NP_033899.2">
    <property type="nucleotide sequence ID" value="NM_009769.4"/>
</dbReference>
<dbReference type="SMR" id="Q9Z0Z7"/>
<dbReference type="BioGRID" id="198396">
    <property type="interactions" value="12"/>
</dbReference>
<dbReference type="CORUM" id="Q9Z0Z7"/>
<dbReference type="DIP" id="DIP-49582N"/>
<dbReference type="FunCoup" id="Q9Z0Z7">
    <property type="interactions" value="1346"/>
</dbReference>
<dbReference type="IntAct" id="Q9Z0Z7">
    <property type="interactions" value="6"/>
</dbReference>
<dbReference type="MINT" id="Q9Z0Z7"/>
<dbReference type="STRING" id="10090.ENSMUSP00000005279"/>
<dbReference type="GlyGen" id="Q9Z0Z7">
    <property type="glycosylation" value="2 sites, 1 O-linked glycan (1 site)"/>
</dbReference>
<dbReference type="iPTMnet" id="Q9Z0Z7"/>
<dbReference type="PhosphoSitePlus" id="Q9Z0Z7"/>
<dbReference type="PaxDb" id="10090-ENSMUSP00000005279"/>
<dbReference type="PeptideAtlas" id="Q9Z0Z7"/>
<dbReference type="ProteomicsDB" id="263649"/>
<dbReference type="Antibodypedia" id="24429">
    <property type="antibodies" value="358 antibodies from 35 providers"/>
</dbReference>
<dbReference type="DNASU" id="12224"/>
<dbReference type="Ensembl" id="ENSMUST00000005279.8">
    <property type="protein sequence ID" value="ENSMUSP00000005279.7"/>
    <property type="gene ID" value="ENSMUSG00000005148.9"/>
</dbReference>
<dbReference type="GeneID" id="12224"/>
<dbReference type="KEGG" id="mmu:12224"/>
<dbReference type="UCSC" id="uc007uvf.1">
    <property type="organism name" value="mouse"/>
</dbReference>
<dbReference type="AGR" id="MGI:1338056"/>
<dbReference type="CTD" id="688"/>
<dbReference type="MGI" id="MGI:1338056">
    <property type="gene designation" value="Klf5"/>
</dbReference>
<dbReference type="VEuPathDB" id="HostDB:ENSMUSG00000005148"/>
<dbReference type="eggNOG" id="KOG1721">
    <property type="taxonomic scope" value="Eukaryota"/>
</dbReference>
<dbReference type="GeneTree" id="ENSGT00940000156711"/>
<dbReference type="HOGENOM" id="CLU_002678_33_3_1"/>
<dbReference type="InParanoid" id="Q9Z0Z7"/>
<dbReference type="OMA" id="QEMPSQF"/>
<dbReference type="OrthoDB" id="4748970at2759"/>
<dbReference type="PhylomeDB" id="Q9Z0Z7"/>
<dbReference type="TreeFam" id="TF350556"/>
<dbReference type="BioGRID-ORCS" id="12224">
    <property type="hits" value="8 hits in 79 CRISPR screens"/>
</dbReference>
<dbReference type="ChiTaRS" id="Klf5">
    <property type="organism name" value="mouse"/>
</dbReference>
<dbReference type="PRO" id="PR:Q9Z0Z7"/>
<dbReference type="Proteomes" id="UP000000589">
    <property type="component" value="Chromosome 14"/>
</dbReference>
<dbReference type="RNAct" id="Q9Z0Z7">
    <property type="molecule type" value="protein"/>
</dbReference>
<dbReference type="Bgee" id="ENSMUSG00000005148">
    <property type="expression patterns" value="Expressed in left colon and 263 other cell types or tissues"/>
</dbReference>
<dbReference type="ExpressionAtlas" id="Q9Z0Z7">
    <property type="expression patterns" value="baseline and differential"/>
</dbReference>
<dbReference type="GO" id="GO:0005794">
    <property type="term" value="C:Golgi apparatus"/>
    <property type="evidence" value="ECO:0007669"/>
    <property type="project" value="Ensembl"/>
</dbReference>
<dbReference type="GO" id="GO:0005654">
    <property type="term" value="C:nucleoplasm"/>
    <property type="evidence" value="ECO:0000304"/>
    <property type="project" value="Reactome"/>
</dbReference>
<dbReference type="GO" id="GO:0005634">
    <property type="term" value="C:nucleus"/>
    <property type="evidence" value="ECO:0000314"/>
    <property type="project" value="MGI"/>
</dbReference>
<dbReference type="GO" id="GO:0005667">
    <property type="term" value="C:transcription regulator complex"/>
    <property type="evidence" value="ECO:0000314"/>
    <property type="project" value="MGI"/>
</dbReference>
<dbReference type="GO" id="GO:0003677">
    <property type="term" value="F:DNA binding"/>
    <property type="evidence" value="ECO:0000314"/>
    <property type="project" value="MGI"/>
</dbReference>
<dbReference type="GO" id="GO:0001228">
    <property type="term" value="F:DNA-binding transcription activator activity, RNA polymerase II-specific"/>
    <property type="evidence" value="ECO:0007669"/>
    <property type="project" value="Ensembl"/>
</dbReference>
<dbReference type="GO" id="GO:0003700">
    <property type="term" value="F:DNA-binding transcription factor activity"/>
    <property type="evidence" value="ECO:0000315"/>
    <property type="project" value="MGI"/>
</dbReference>
<dbReference type="GO" id="GO:0000981">
    <property type="term" value="F:DNA-binding transcription factor activity, RNA polymerase II-specific"/>
    <property type="evidence" value="ECO:0000314"/>
    <property type="project" value="MGI"/>
</dbReference>
<dbReference type="GO" id="GO:0043426">
    <property type="term" value="F:MRF binding"/>
    <property type="evidence" value="ECO:0000353"/>
    <property type="project" value="MGI"/>
</dbReference>
<dbReference type="GO" id="GO:0000978">
    <property type="term" value="F:RNA polymerase II cis-regulatory region sequence-specific DNA binding"/>
    <property type="evidence" value="ECO:0000314"/>
    <property type="project" value="MGI"/>
</dbReference>
<dbReference type="GO" id="GO:0008270">
    <property type="term" value="F:zinc ion binding"/>
    <property type="evidence" value="ECO:0007669"/>
    <property type="project" value="UniProtKB-KW"/>
</dbReference>
<dbReference type="GO" id="GO:0001525">
    <property type="term" value="P:angiogenesis"/>
    <property type="evidence" value="ECO:0000315"/>
    <property type="project" value="MGI"/>
</dbReference>
<dbReference type="GO" id="GO:1990830">
    <property type="term" value="P:cellular response to leukemia inhibitory factor"/>
    <property type="evidence" value="ECO:0000270"/>
    <property type="project" value="MGI"/>
</dbReference>
<dbReference type="GO" id="GO:1901653">
    <property type="term" value="P:cellular response to peptide"/>
    <property type="evidence" value="ECO:0007669"/>
    <property type="project" value="Ensembl"/>
</dbReference>
<dbReference type="GO" id="GO:0060576">
    <property type="term" value="P:intestinal epithelial cell development"/>
    <property type="evidence" value="ECO:0000315"/>
    <property type="project" value="MGI"/>
</dbReference>
<dbReference type="GO" id="GO:0030033">
    <property type="term" value="P:microvillus assembly"/>
    <property type="evidence" value="ECO:0000315"/>
    <property type="project" value="MGI"/>
</dbReference>
<dbReference type="GO" id="GO:0014908">
    <property type="term" value="P:myotube differentiation involved in skeletal muscle regeneration"/>
    <property type="evidence" value="ECO:0000314"/>
    <property type="project" value="MGI"/>
</dbReference>
<dbReference type="GO" id="GO:0000122">
    <property type="term" value="P:negative regulation of transcription by RNA polymerase II"/>
    <property type="evidence" value="ECO:0000314"/>
    <property type="project" value="MGI"/>
</dbReference>
<dbReference type="GO" id="GO:0008284">
    <property type="term" value="P:positive regulation of cell population proliferation"/>
    <property type="evidence" value="ECO:0007669"/>
    <property type="project" value="Ensembl"/>
</dbReference>
<dbReference type="GO" id="GO:0045893">
    <property type="term" value="P:positive regulation of DNA-templated transcription"/>
    <property type="evidence" value="ECO:0000315"/>
    <property type="project" value="MGI"/>
</dbReference>
<dbReference type="GO" id="GO:0045600">
    <property type="term" value="P:positive regulation of fat cell differentiation"/>
    <property type="evidence" value="ECO:0000315"/>
    <property type="project" value="MGI"/>
</dbReference>
<dbReference type="GO" id="GO:0045944">
    <property type="term" value="P:positive regulation of transcription by RNA polymerase II"/>
    <property type="evidence" value="ECO:0000314"/>
    <property type="project" value="MGI"/>
</dbReference>
<dbReference type="GO" id="GO:0061586">
    <property type="term" value="P:positive regulation of transcription by transcription factor localization"/>
    <property type="evidence" value="ECO:0000314"/>
    <property type="project" value="MGI"/>
</dbReference>
<dbReference type="GO" id="GO:0010468">
    <property type="term" value="P:regulation of gene expression"/>
    <property type="evidence" value="ECO:0000315"/>
    <property type="project" value="MGI"/>
</dbReference>
<dbReference type="GO" id="GO:0032534">
    <property type="term" value="P:regulation of microvillus assembly"/>
    <property type="evidence" value="ECO:0000315"/>
    <property type="project" value="MGI"/>
</dbReference>
<dbReference type="GO" id="GO:0006357">
    <property type="term" value="P:regulation of transcription by RNA polymerase II"/>
    <property type="evidence" value="ECO:0000315"/>
    <property type="project" value="MGI"/>
</dbReference>
<dbReference type="GO" id="GO:0014901">
    <property type="term" value="P:satellite cell activation involved in skeletal muscle regeneration"/>
    <property type="evidence" value="ECO:0000315"/>
    <property type="project" value="MGI"/>
</dbReference>
<dbReference type="GO" id="GO:0035914">
    <property type="term" value="P:skeletal muscle cell differentiation"/>
    <property type="evidence" value="ECO:0000315"/>
    <property type="project" value="MGI"/>
</dbReference>
<dbReference type="GO" id="GO:0014816">
    <property type="term" value="P:skeletal muscle satellite cell differentiation"/>
    <property type="evidence" value="ECO:0000315"/>
    <property type="project" value="MGI"/>
</dbReference>
<dbReference type="GO" id="GO:0043403">
    <property type="term" value="P:skeletal muscle tissue regeneration"/>
    <property type="evidence" value="ECO:0000315"/>
    <property type="project" value="MGI"/>
</dbReference>
<dbReference type="CDD" id="cd21579">
    <property type="entry name" value="KLF5_N"/>
    <property type="match status" value="1"/>
</dbReference>
<dbReference type="FunFam" id="3.30.160.60:FF:000021">
    <property type="entry name" value="Basic krueppel-like factor 3"/>
    <property type="match status" value="1"/>
</dbReference>
<dbReference type="FunFam" id="3.30.160.60:FF:000018">
    <property type="entry name" value="Krueppel-like factor 15"/>
    <property type="match status" value="1"/>
</dbReference>
<dbReference type="FunFam" id="3.30.160.60:FF:000624">
    <property type="entry name" value="zinc finger protein 697"/>
    <property type="match status" value="1"/>
</dbReference>
<dbReference type="Gene3D" id="3.30.160.60">
    <property type="entry name" value="Classic Zinc Finger"/>
    <property type="match status" value="3"/>
</dbReference>
<dbReference type="InterPro" id="IPR036236">
    <property type="entry name" value="Znf_C2H2_sf"/>
</dbReference>
<dbReference type="InterPro" id="IPR013087">
    <property type="entry name" value="Znf_C2H2_type"/>
</dbReference>
<dbReference type="PANTHER" id="PTHR23235:SF82">
    <property type="entry name" value="KRUEPPEL-LIKE FACTOR 5"/>
    <property type="match status" value="1"/>
</dbReference>
<dbReference type="PANTHER" id="PTHR23235">
    <property type="entry name" value="KRUEPPEL-LIKE TRANSCRIPTION FACTOR"/>
    <property type="match status" value="1"/>
</dbReference>
<dbReference type="Pfam" id="PF00096">
    <property type="entry name" value="zf-C2H2"/>
    <property type="match status" value="3"/>
</dbReference>
<dbReference type="SMART" id="SM00355">
    <property type="entry name" value="ZnF_C2H2"/>
    <property type="match status" value="3"/>
</dbReference>
<dbReference type="SUPFAM" id="SSF57667">
    <property type="entry name" value="beta-beta-alpha zinc fingers"/>
    <property type="match status" value="2"/>
</dbReference>
<dbReference type="PROSITE" id="PS00028">
    <property type="entry name" value="ZINC_FINGER_C2H2_1"/>
    <property type="match status" value="3"/>
</dbReference>
<dbReference type="PROSITE" id="PS50157">
    <property type="entry name" value="ZINC_FINGER_C2H2_2"/>
    <property type="match status" value="3"/>
</dbReference>
<feature type="chain" id="PRO_0000047170" description="Krueppel-like factor 5">
    <location>
        <begin position="1"/>
        <end position="446"/>
    </location>
</feature>
<feature type="zinc finger region" description="C2H2-type 1" evidence="3">
    <location>
        <begin position="362"/>
        <end position="386"/>
    </location>
</feature>
<feature type="zinc finger region" description="C2H2-type 2" evidence="3">
    <location>
        <begin position="392"/>
        <end position="416"/>
    </location>
</feature>
<feature type="zinc finger region" description="C2H2-type 3" evidence="3">
    <location>
        <begin position="422"/>
        <end position="444"/>
    </location>
</feature>
<feature type="region of interest" description="Disordered" evidence="4">
    <location>
        <begin position="1"/>
        <end position="22"/>
    </location>
</feature>
<feature type="region of interest" description="Disordered" evidence="4">
    <location>
        <begin position="50"/>
        <end position="69"/>
    </location>
</feature>
<feature type="region of interest" description="Disordered" evidence="4">
    <location>
        <begin position="284"/>
        <end position="310"/>
    </location>
</feature>
<feature type="region of interest" description="Interaction with WWP1" evidence="1">
    <location>
        <begin position="313"/>
        <end position="317"/>
    </location>
</feature>
<feature type="short sequence motif" description="9aaTAD" evidence="2">
    <location>
        <begin position="107"/>
        <end position="115"/>
    </location>
</feature>
<feature type="cross-link" description="Glycyl lysine isopeptide (Lys-Gly) (interchain with G-Cter in SUMO2)" evidence="2">
    <location>
        <position position="31"/>
    </location>
</feature>
<feature type="cross-link" description="Glycyl lysine isopeptide (Lys-Gly) (interchain with G-Cter in SUMO2)" evidence="2">
    <location>
        <position position="52"/>
    </location>
</feature>
<feature type="cross-link" description="Glycyl lysine isopeptide (Lys-Gly) (interchain with G-Cter in SUMO2)" evidence="2">
    <location>
        <position position="83"/>
    </location>
</feature>
<feature type="cross-link" description="Glycyl lysine isopeptide (Lys-Gly) (interchain with G-Cter in SUMO2)" evidence="2">
    <location>
        <position position="99"/>
    </location>
</feature>
<feature type="sequence conflict" description="In Ref. 2; AAD17696." evidence="5" ref="2">
    <original>D</original>
    <variation>A</variation>
    <location>
        <position position="23"/>
    </location>
</feature>
<protein>
    <recommendedName>
        <fullName>Krueppel-like factor 5</fullName>
    </recommendedName>
    <alternativeName>
        <fullName>Basic transcription element-binding protein 2</fullName>
        <shortName>BTE-binding protein 2</shortName>
    </alternativeName>
    <alternativeName>
        <fullName>Intestinal-enriched krueppel-like factor</fullName>
    </alternativeName>
    <alternativeName>
        <fullName>Transcription factor BTEB2</fullName>
    </alternativeName>
</protein>
<evidence type="ECO:0000250" key="1"/>
<evidence type="ECO:0000250" key="2">
    <source>
        <dbReference type="UniProtKB" id="Q13887"/>
    </source>
</evidence>
<evidence type="ECO:0000255" key="3">
    <source>
        <dbReference type="PROSITE-ProRule" id="PRU00042"/>
    </source>
</evidence>
<evidence type="ECO:0000256" key="4">
    <source>
        <dbReference type="SAM" id="MobiDB-lite"/>
    </source>
</evidence>
<evidence type="ECO:0000305" key="5"/>
<name>KLF5_MOUSE</name>
<proteinExistence type="evidence at protein level"/>
<comment type="function">
    <text>Transcription factor that binds to GC box promoter elements. Activates the transcription of these genes.</text>
</comment>
<comment type="subunit">
    <text evidence="2">Interacts with WWP1. Interacts with ANP32B; this interaction induces promoter region-specific histone incorporation and inhibition of histone acetylation by ANP32B.</text>
</comment>
<comment type="interaction">
    <interactant intactId="EBI-647919">
        <id>Q9Z0Z7</id>
    </interactant>
    <interactant intactId="EBI-359574">
        <id>Q969H0</id>
        <label>FBXW7</label>
    </interactant>
    <organismsDiffer>true</organismsDiffer>
    <experiments>2</experiments>
</comment>
<comment type="subcellular location">
    <subcellularLocation>
        <location>Nucleus</location>
    </subcellularLocation>
</comment>
<comment type="tissue specificity">
    <text>Highest expression in digestive track.</text>
</comment>
<comment type="domain">
    <text evidence="2">The 9aaTAD motif is a transactivation domain present in a large number of yeast and animal transcription factors.</text>
</comment>
<comment type="PTM">
    <text evidence="1">Ubiquitinated (By similarity). Polyubiquitination involves WWP1 and leads to proteasomal degradation of this protein.</text>
</comment>
<comment type="similarity">
    <text evidence="5">Belongs to the krueppel C2H2-type zinc-finger protein family.</text>
</comment>
<reference key="1">
    <citation type="journal article" date="1999" name="Nucleic Acids Res.">
        <title>A gene encoding an intestinal-enriched member of the Kruppel-like factor family expressed in intestinal epithelial cells.</title>
        <authorList>
            <person name="Conkright M.D."/>
            <person name="Wani M.A."/>
            <person name="Anderson K.P."/>
            <person name="Lingrel J.B."/>
        </authorList>
    </citation>
    <scope>NUCLEOTIDE SEQUENCE [MRNA]</scope>
    <source>
        <strain>C57BL/6J</strain>
        <tissue>Intestine</tissue>
    </source>
</reference>
<reference key="2">
    <citation type="journal article" date="2000" name="Dev. Dyn.">
        <title>Developmental expression of the mouse gene coding for the Kruppel-like transcription factor KLF5.</title>
        <authorList>
            <person name="Ohnishi S."/>
            <person name="Laub F."/>
            <person name="Matsumoto N."/>
            <person name="Asaka M."/>
            <person name="Ramirez F."/>
            <person name="Yoshida T."/>
            <person name="Terada M."/>
        </authorList>
    </citation>
    <scope>NUCLEOTIDE SEQUENCE [MRNA]</scope>
</reference>
<reference key="3">
    <citation type="journal article" date="2004" name="Genome Res.">
        <title>The status, quality, and expansion of the NIH full-length cDNA project: the Mammalian Gene Collection (MGC).</title>
        <authorList>
            <consortium name="The MGC Project Team"/>
        </authorList>
    </citation>
    <scope>NUCLEOTIDE SEQUENCE [LARGE SCALE MRNA]</scope>
    <source>
        <tissue>Colon</tissue>
    </source>
</reference>